<gene>
    <name evidence="1" type="primary">pepX</name>
    <name type="ordered locus">lp_0857</name>
</gene>
<keyword id="KW-0031">Aminopeptidase</keyword>
<keyword id="KW-0963">Cytoplasm</keyword>
<keyword id="KW-0378">Hydrolase</keyword>
<keyword id="KW-0645">Protease</keyword>
<keyword id="KW-1185">Reference proteome</keyword>
<keyword id="KW-0720">Serine protease</keyword>
<accession>Q88YC0</accession>
<accession>F9UM69</accession>
<sequence length="813" mass="91548">MKNNQFAIVPTDSETAIAELTKIHFITPDMDALTTVPAVYQALLAKSLPEVHTASGLTHKFNNIMATSQHTLSEWLADATIVNNQVFYNVGLQLLGFLPGQDFELADPLLAMRDIHLPMVGDSAFDREALYYAWYLLLNTRGNNGQTLIESLTTRGYFVPFYQLPNDQKPLFFNGKAQAVFDTNALIRDVVYVEAPLDTDHDGQRDLLKVEILRPAETETGLKVPVLYTASPYNQGINDQAGDAQMHNVDVPLTAKEPDENTYADVEFQPTTAQLPAARTATTTTDTAEETFSREKSYTLNDYFLARGFAVVYAAGIGSIDSDGLAPTGDVDETTSTVAIIEWLTGKRQAFTNRDGNIAIKAWWCNGAVAMTGRSYLGTLATAAATTGVAGLKTIISEAAISSWYDYYRDNGLVVAPDTFQGEDTDVLAAEVFSRSLKAGDAHQIQPAFDQKLAELTADQDRASGNYNRFWDERNYLKNVDKIKADIIMVHGLNDWNVKPRNVANLWDKLQAVPVTKKLILHQGQHIYINNLQSLDFTDMMNLWLSHKLYGLDNHAETLLPNVLVQDNTQAQTWHGYDNWWQDTTDALDFKVQYKELVPADHTVDQRAAHFTDKLPDKLFDHYKHHLDSWQRDLLQEDKLNPLYDHRLLFKSWQAPEDQLLVGIPHVAGSVAVNKNFGMLSFMLIDFGAARRLTVSPQILAAKALDLGYHWREDDLKDFKLAGETPFKMITKGHLNLQNRHHPWHAEAIQPNVFYDFSVDLQPLFHHLLKGHQLGLVIYATDMKMTIRGNQDLQYSLNLNDIRLHVPMKKITD</sequence>
<evidence type="ECO:0000255" key="1">
    <source>
        <dbReference type="HAMAP-Rule" id="MF_00698"/>
    </source>
</evidence>
<organism>
    <name type="scientific">Lactiplantibacillus plantarum (strain ATCC BAA-793 / NCIMB 8826 / WCFS1)</name>
    <name type="common">Lactobacillus plantarum</name>
    <dbReference type="NCBI Taxonomy" id="220668"/>
    <lineage>
        <taxon>Bacteria</taxon>
        <taxon>Bacillati</taxon>
        <taxon>Bacillota</taxon>
        <taxon>Bacilli</taxon>
        <taxon>Lactobacillales</taxon>
        <taxon>Lactobacillaceae</taxon>
        <taxon>Lactiplantibacillus</taxon>
    </lineage>
</organism>
<feature type="chain" id="PRO_0000220222" description="Xaa-Pro dipeptidyl-peptidase">
    <location>
        <begin position="1"/>
        <end position="813"/>
    </location>
</feature>
<feature type="active site" description="Charge relay system" evidence="1">
    <location>
        <position position="375"/>
    </location>
</feature>
<feature type="active site" description="Charge relay system" evidence="1">
    <location>
        <position position="495"/>
    </location>
</feature>
<feature type="active site" description="Charge relay system" evidence="1">
    <location>
        <position position="526"/>
    </location>
</feature>
<comment type="function">
    <text evidence="1">Removes N-terminal dipeptides sequentially from polypeptides having unsubstituted N-termini provided that the penultimate residue is proline.</text>
</comment>
<comment type="catalytic activity">
    <reaction evidence="1">
        <text>Hydrolyzes Xaa-Pro-|- bonds to release unblocked, N-terminal dipeptides from substrates including Ala-Pro-|-p-nitroanilide and (sequentially) Tyr-Pro-|-Phe-Pro-|-Gly-Pro-|-Ile.</text>
        <dbReference type="EC" id="3.4.14.11"/>
    </reaction>
</comment>
<comment type="subunit">
    <text evidence="1">Homodimer.</text>
</comment>
<comment type="subcellular location">
    <subcellularLocation>
        <location evidence="1">Cytoplasm</location>
    </subcellularLocation>
</comment>
<comment type="similarity">
    <text evidence="1">Belongs to the peptidase S15 family.</text>
</comment>
<protein>
    <recommendedName>
        <fullName evidence="1">Xaa-Pro dipeptidyl-peptidase</fullName>
        <ecNumber evidence="1">3.4.14.11</ecNumber>
    </recommendedName>
    <alternativeName>
        <fullName evidence="1">X-Pro dipeptidyl-peptidase</fullName>
    </alternativeName>
    <alternativeName>
        <fullName evidence="1">X-prolyl-dipeptidyl aminopeptidase</fullName>
        <shortName evidence="1">X-PDAP</shortName>
    </alternativeName>
</protein>
<name>PEPX_LACPL</name>
<dbReference type="EC" id="3.4.14.11" evidence="1"/>
<dbReference type="EMBL" id="AL935263">
    <property type="protein sequence ID" value="CCC78308.1"/>
    <property type="molecule type" value="Genomic_DNA"/>
</dbReference>
<dbReference type="RefSeq" id="WP_011101183.1">
    <property type="nucleotide sequence ID" value="NC_004567.2"/>
</dbReference>
<dbReference type="RefSeq" id="YP_004888822.1">
    <property type="nucleotide sequence ID" value="NC_004567.2"/>
</dbReference>
<dbReference type="SMR" id="Q88YC0"/>
<dbReference type="STRING" id="220668.lp_0857"/>
<dbReference type="ESTHER" id="lacpl-pepx">
    <property type="family name" value="Lactobacillus_peptidase"/>
</dbReference>
<dbReference type="EnsemblBacteria" id="CCC78308">
    <property type="protein sequence ID" value="CCC78308"/>
    <property type="gene ID" value="lp_0857"/>
</dbReference>
<dbReference type="KEGG" id="lpl:lp_0857"/>
<dbReference type="PATRIC" id="fig|220668.9.peg.728"/>
<dbReference type="eggNOG" id="COG2936">
    <property type="taxonomic scope" value="Bacteria"/>
</dbReference>
<dbReference type="HOGENOM" id="CLU_011800_0_0_9"/>
<dbReference type="OrthoDB" id="319764at2"/>
<dbReference type="PhylomeDB" id="Q88YC0"/>
<dbReference type="Proteomes" id="UP000000432">
    <property type="component" value="Chromosome"/>
</dbReference>
<dbReference type="GO" id="GO:0005737">
    <property type="term" value="C:cytoplasm"/>
    <property type="evidence" value="ECO:0007669"/>
    <property type="project" value="UniProtKB-SubCell"/>
</dbReference>
<dbReference type="GO" id="GO:0004177">
    <property type="term" value="F:aminopeptidase activity"/>
    <property type="evidence" value="ECO:0007669"/>
    <property type="project" value="UniProtKB-KW"/>
</dbReference>
<dbReference type="GO" id="GO:0008239">
    <property type="term" value="F:dipeptidyl-peptidase activity"/>
    <property type="evidence" value="ECO:0007669"/>
    <property type="project" value="UniProtKB-UniRule"/>
</dbReference>
<dbReference type="GO" id="GO:0008236">
    <property type="term" value="F:serine-type peptidase activity"/>
    <property type="evidence" value="ECO:0007669"/>
    <property type="project" value="UniProtKB-KW"/>
</dbReference>
<dbReference type="GO" id="GO:0006508">
    <property type="term" value="P:proteolysis"/>
    <property type="evidence" value="ECO:0007669"/>
    <property type="project" value="UniProtKB-KW"/>
</dbReference>
<dbReference type="Gene3D" id="1.10.246.70">
    <property type="match status" value="1"/>
</dbReference>
<dbReference type="Gene3D" id="3.40.50.1820">
    <property type="entry name" value="alpha/beta hydrolase"/>
    <property type="match status" value="1"/>
</dbReference>
<dbReference type="Gene3D" id="2.60.120.260">
    <property type="entry name" value="Galactose-binding domain-like"/>
    <property type="match status" value="1"/>
</dbReference>
<dbReference type="HAMAP" id="MF_00698">
    <property type="entry name" value="Aminopeptidase_S15"/>
    <property type="match status" value="1"/>
</dbReference>
<dbReference type="InterPro" id="IPR029058">
    <property type="entry name" value="AB_hydrolase_fold"/>
</dbReference>
<dbReference type="InterPro" id="IPR008979">
    <property type="entry name" value="Galactose-bd-like_sf"/>
</dbReference>
<dbReference type="InterPro" id="IPR008252">
    <property type="entry name" value="Pept_S15_Xpro"/>
</dbReference>
<dbReference type="InterPro" id="IPR015251">
    <property type="entry name" value="PepX_N_dom"/>
</dbReference>
<dbReference type="InterPro" id="IPR036313">
    <property type="entry name" value="PepX_N_dom_sf"/>
</dbReference>
<dbReference type="InterPro" id="IPR000383">
    <property type="entry name" value="Xaa-Pro-like_dom"/>
</dbReference>
<dbReference type="InterPro" id="IPR013736">
    <property type="entry name" value="Xaa-Pro_dipept_C"/>
</dbReference>
<dbReference type="NCBIfam" id="NF003781">
    <property type="entry name" value="PRK05371.1-2"/>
    <property type="match status" value="1"/>
</dbReference>
<dbReference type="Pfam" id="PF02129">
    <property type="entry name" value="Peptidase_S15"/>
    <property type="match status" value="1"/>
</dbReference>
<dbReference type="Pfam" id="PF08530">
    <property type="entry name" value="PepX_C"/>
    <property type="match status" value="1"/>
</dbReference>
<dbReference type="Pfam" id="PF09168">
    <property type="entry name" value="PepX_N"/>
    <property type="match status" value="1"/>
</dbReference>
<dbReference type="PRINTS" id="PR00923">
    <property type="entry name" value="LACTOPTASE"/>
</dbReference>
<dbReference type="SMART" id="SM00939">
    <property type="entry name" value="PepX_C"/>
    <property type="match status" value="1"/>
</dbReference>
<dbReference type="SMART" id="SM00940">
    <property type="entry name" value="PepX_N"/>
    <property type="match status" value="1"/>
</dbReference>
<dbReference type="SUPFAM" id="SSF53474">
    <property type="entry name" value="alpha/beta-Hydrolases"/>
    <property type="match status" value="1"/>
</dbReference>
<dbReference type="SUPFAM" id="SSF49785">
    <property type="entry name" value="Galactose-binding domain-like"/>
    <property type="match status" value="1"/>
</dbReference>
<dbReference type="SUPFAM" id="SSF81761">
    <property type="entry name" value="X-Prolyl dipeptidyl aminopeptidase PepX, N-terminal domain"/>
    <property type="match status" value="1"/>
</dbReference>
<reference key="1">
    <citation type="journal article" date="2003" name="Proc. Natl. Acad. Sci. U.S.A.">
        <title>Complete genome sequence of Lactobacillus plantarum WCFS1.</title>
        <authorList>
            <person name="Kleerebezem M."/>
            <person name="Boekhorst J."/>
            <person name="van Kranenburg R."/>
            <person name="Molenaar D."/>
            <person name="Kuipers O.P."/>
            <person name="Leer R."/>
            <person name="Tarchini R."/>
            <person name="Peters S.A."/>
            <person name="Sandbrink H.M."/>
            <person name="Fiers M.W.E.J."/>
            <person name="Stiekema W."/>
            <person name="Klein Lankhorst R.M."/>
            <person name="Bron P.A."/>
            <person name="Hoffer S.M."/>
            <person name="Nierop Groot M.N."/>
            <person name="Kerkhoven R."/>
            <person name="De Vries M."/>
            <person name="Ursing B."/>
            <person name="De Vos W.M."/>
            <person name="Siezen R.J."/>
        </authorList>
    </citation>
    <scope>NUCLEOTIDE SEQUENCE [LARGE SCALE GENOMIC DNA]</scope>
    <source>
        <strain>ATCC BAA-793 / NCIMB 8826 / WCFS1</strain>
    </source>
</reference>
<reference key="2">
    <citation type="journal article" date="2012" name="J. Bacteriol.">
        <title>Complete resequencing and reannotation of the Lactobacillus plantarum WCFS1 genome.</title>
        <authorList>
            <person name="Siezen R.J."/>
            <person name="Francke C."/>
            <person name="Renckens B."/>
            <person name="Boekhorst J."/>
            <person name="Wels M."/>
            <person name="Kleerebezem M."/>
            <person name="van Hijum S.A."/>
        </authorList>
    </citation>
    <scope>NUCLEOTIDE SEQUENCE [LARGE SCALE GENOMIC DNA]</scope>
    <scope>GENOME REANNOTATION</scope>
    <source>
        <strain>ATCC BAA-793 / NCIMB 8826 / WCFS1</strain>
    </source>
</reference>
<proteinExistence type="inferred from homology"/>